<evidence type="ECO:0000255" key="1">
    <source>
        <dbReference type="HAMAP-Rule" id="MF_00003"/>
    </source>
</evidence>
<accession>B8ZM94</accession>
<name>RBFA_STRPJ</name>
<keyword id="KW-0963">Cytoplasm</keyword>
<keyword id="KW-0690">Ribosome biogenesis</keyword>
<protein>
    <recommendedName>
        <fullName evidence="1">Ribosome-binding factor A</fullName>
    </recommendedName>
</protein>
<organism>
    <name type="scientific">Streptococcus pneumoniae (strain ATCC 700669 / Spain 23F-1)</name>
    <dbReference type="NCBI Taxonomy" id="561276"/>
    <lineage>
        <taxon>Bacteria</taxon>
        <taxon>Bacillati</taxon>
        <taxon>Bacillota</taxon>
        <taxon>Bacilli</taxon>
        <taxon>Lactobacillales</taxon>
        <taxon>Streptococcaceae</taxon>
        <taxon>Streptococcus</taxon>
    </lineage>
</organism>
<sequence length="116" mass="13310">MANHFRTDRVGMEIKREVNEILQKKVRDPRVQGVTITDVQMLGDLSVAKVYYTILSNLASDNQKAQIGLEKATGTIKRELGRNLKLYKIPDLTFVKDESIEYGNKIDEMLRNLDKN</sequence>
<reference key="1">
    <citation type="journal article" date="2009" name="J. Bacteriol.">
        <title>Role of conjugative elements in the evolution of the multidrug-resistant pandemic clone Streptococcus pneumoniae Spain23F ST81.</title>
        <authorList>
            <person name="Croucher N.J."/>
            <person name="Walker D."/>
            <person name="Romero P."/>
            <person name="Lennard N."/>
            <person name="Paterson G.K."/>
            <person name="Bason N.C."/>
            <person name="Mitchell A.M."/>
            <person name="Quail M.A."/>
            <person name="Andrew P.W."/>
            <person name="Parkhill J."/>
            <person name="Bentley S.D."/>
            <person name="Mitchell T.J."/>
        </authorList>
    </citation>
    <scope>NUCLEOTIDE SEQUENCE [LARGE SCALE GENOMIC DNA]</scope>
    <source>
        <strain>ATCC 700669 / Spain 23F-1</strain>
    </source>
</reference>
<feature type="chain" id="PRO_1000116217" description="Ribosome-binding factor A">
    <location>
        <begin position="1"/>
        <end position="116"/>
    </location>
</feature>
<gene>
    <name evidence="1" type="primary">rbfA</name>
    <name type="ordered locus">SPN23F05030</name>
</gene>
<proteinExistence type="inferred from homology"/>
<dbReference type="EMBL" id="FM211187">
    <property type="protein sequence ID" value="CAR68353.1"/>
    <property type="molecule type" value="Genomic_DNA"/>
</dbReference>
<dbReference type="RefSeq" id="WP_001273601.1">
    <property type="nucleotide sequence ID" value="NC_011900.1"/>
</dbReference>
<dbReference type="SMR" id="B8ZM94"/>
<dbReference type="GeneID" id="93738448"/>
<dbReference type="KEGG" id="sne:SPN23F05030"/>
<dbReference type="HOGENOM" id="CLU_089475_3_0_9"/>
<dbReference type="GO" id="GO:0005829">
    <property type="term" value="C:cytosol"/>
    <property type="evidence" value="ECO:0007669"/>
    <property type="project" value="TreeGrafter"/>
</dbReference>
<dbReference type="GO" id="GO:0043024">
    <property type="term" value="F:ribosomal small subunit binding"/>
    <property type="evidence" value="ECO:0007669"/>
    <property type="project" value="TreeGrafter"/>
</dbReference>
<dbReference type="GO" id="GO:0030490">
    <property type="term" value="P:maturation of SSU-rRNA"/>
    <property type="evidence" value="ECO:0007669"/>
    <property type="project" value="UniProtKB-UniRule"/>
</dbReference>
<dbReference type="FunFam" id="3.30.300.20:FF:000012">
    <property type="entry name" value="Ribosome-binding factor A"/>
    <property type="match status" value="1"/>
</dbReference>
<dbReference type="Gene3D" id="3.30.300.20">
    <property type="match status" value="1"/>
</dbReference>
<dbReference type="HAMAP" id="MF_00003">
    <property type="entry name" value="RbfA"/>
    <property type="match status" value="1"/>
</dbReference>
<dbReference type="InterPro" id="IPR015946">
    <property type="entry name" value="KH_dom-like_a/b"/>
</dbReference>
<dbReference type="InterPro" id="IPR000238">
    <property type="entry name" value="RbfA"/>
</dbReference>
<dbReference type="InterPro" id="IPR023799">
    <property type="entry name" value="RbfA_dom_sf"/>
</dbReference>
<dbReference type="InterPro" id="IPR020053">
    <property type="entry name" value="Ribosome-bd_factorA_CS"/>
</dbReference>
<dbReference type="NCBIfam" id="TIGR00082">
    <property type="entry name" value="rbfA"/>
    <property type="match status" value="1"/>
</dbReference>
<dbReference type="PANTHER" id="PTHR33515">
    <property type="entry name" value="RIBOSOME-BINDING FACTOR A, CHLOROPLASTIC-RELATED"/>
    <property type="match status" value="1"/>
</dbReference>
<dbReference type="PANTHER" id="PTHR33515:SF1">
    <property type="entry name" value="RIBOSOME-BINDING FACTOR A, CHLOROPLASTIC-RELATED"/>
    <property type="match status" value="1"/>
</dbReference>
<dbReference type="Pfam" id="PF02033">
    <property type="entry name" value="RBFA"/>
    <property type="match status" value="1"/>
</dbReference>
<dbReference type="SUPFAM" id="SSF89919">
    <property type="entry name" value="Ribosome-binding factor A, RbfA"/>
    <property type="match status" value="1"/>
</dbReference>
<dbReference type="PROSITE" id="PS01319">
    <property type="entry name" value="RBFA"/>
    <property type="match status" value="1"/>
</dbReference>
<comment type="function">
    <text evidence="1">One of several proteins that assist in the late maturation steps of the functional core of the 30S ribosomal subunit. Associates with free 30S ribosomal subunits (but not with 30S subunits that are part of 70S ribosomes or polysomes). Required for efficient processing of 16S rRNA. May interact with the 5'-terminal helix region of 16S rRNA.</text>
</comment>
<comment type="subunit">
    <text evidence="1">Monomer. Binds 30S ribosomal subunits, but not 50S ribosomal subunits or 70S ribosomes.</text>
</comment>
<comment type="subcellular location">
    <subcellularLocation>
        <location evidence="1">Cytoplasm</location>
    </subcellularLocation>
</comment>
<comment type="similarity">
    <text evidence="1">Belongs to the RbfA family.</text>
</comment>